<reference key="1">
    <citation type="journal article" date="1998" name="Science">
        <title>Genome sequence of the nematode C. elegans: a platform for investigating biology.</title>
        <authorList>
            <consortium name="The C. elegans sequencing consortium"/>
        </authorList>
    </citation>
    <scope>NUCLEOTIDE SEQUENCE [LARGE SCALE GENOMIC DNA]</scope>
    <source>
        <strain>Bristol N2</strain>
    </source>
</reference>
<protein>
    <recommendedName>
        <fullName>Protein rogdi homolog</fullName>
    </recommendedName>
</protein>
<sequence>MEVQSLTITTNYPPKPASPNPQDIRDTIRSNKTNENLWIQRKDVDTTLRSALEHLKACCIVLNLSAKCDERLNVAVSHGTTEKYQLMSRTGSSDNLKAAVTLLDDNVIQAEVTVKYPKAGGGYYRAVAQPDVQWKLQQLQDLGNHISRVTITLCDLQHEVNLLKGDGERDAFTLATGARILEELKLTMNEISLARNSIMLPRKRSLLELCYFPPTRKFVPPLPQDQLISFYISCCRLVCASYQMVPKTVHPQGLSVFMAESQLPHLDDVIKHLNTVMAILQKLINYLSATMS</sequence>
<proteinExistence type="inferred from homology"/>
<dbReference type="EMBL" id="FO081548">
    <property type="protein sequence ID" value="CCD72343.1"/>
    <property type="molecule type" value="Genomic_DNA"/>
</dbReference>
<dbReference type="PIR" id="B88508">
    <property type="entry name" value="B88508"/>
</dbReference>
<dbReference type="RefSeq" id="NP_498641.1">
    <property type="nucleotide sequence ID" value="NM_066240.6"/>
</dbReference>
<dbReference type="SMR" id="O17213"/>
<dbReference type="BioGRID" id="41266">
    <property type="interactions" value="1"/>
</dbReference>
<dbReference type="FunCoup" id="O17213">
    <property type="interactions" value="1762"/>
</dbReference>
<dbReference type="STRING" id="6239.H14A12.3.1"/>
<dbReference type="PaxDb" id="6239-H14A12.3"/>
<dbReference type="PeptideAtlas" id="O17213"/>
<dbReference type="EnsemblMetazoa" id="H14A12.3.1">
    <property type="protein sequence ID" value="H14A12.3.1"/>
    <property type="gene ID" value="WBGene00019196"/>
</dbReference>
<dbReference type="GeneID" id="176058"/>
<dbReference type="KEGG" id="cel:CELE_H14A12.3"/>
<dbReference type="UCSC" id="H14A12.3">
    <property type="organism name" value="c. elegans"/>
</dbReference>
<dbReference type="AGR" id="WB:WBGene00019196"/>
<dbReference type="CTD" id="176058"/>
<dbReference type="WormBase" id="H14A12.3">
    <property type="protein sequence ID" value="CE28734"/>
    <property type="gene ID" value="WBGene00019196"/>
</dbReference>
<dbReference type="eggNOG" id="KOG3992">
    <property type="taxonomic scope" value="Eukaryota"/>
</dbReference>
<dbReference type="GeneTree" id="ENSGT00390000007164"/>
<dbReference type="HOGENOM" id="CLU_947432_0_0_1"/>
<dbReference type="InParanoid" id="O17213"/>
<dbReference type="OMA" id="NILMECA"/>
<dbReference type="OrthoDB" id="66510at2759"/>
<dbReference type="PhylomeDB" id="O17213"/>
<dbReference type="PRO" id="PR:O17213"/>
<dbReference type="Proteomes" id="UP000001940">
    <property type="component" value="Chromosome III"/>
</dbReference>
<dbReference type="Bgee" id="WBGene00019196">
    <property type="expression patterns" value="Expressed in germ line (C elegans) and 4 other cell types or tissues"/>
</dbReference>
<dbReference type="GO" id="GO:0005635">
    <property type="term" value="C:nuclear envelope"/>
    <property type="evidence" value="ECO:0007669"/>
    <property type="project" value="UniProtKB-SubCell"/>
</dbReference>
<dbReference type="GO" id="GO:0043291">
    <property type="term" value="C:RAVE complex"/>
    <property type="evidence" value="ECO:0000318"/>
    <property type="project" value="GO_Central"/>
</dbReference>
<dbReference type="InterPro" id="IPR028241">
    <property type="entry name" value="RAVE2/Rogdi"/>
</dbReference>
<dbReference type="PANTHER" id="PTHR13618">
    <property type="entry name" value="LEUCINE ZIPPER CONTAINING TRANSCRIPTION FACTOR LZF1"/>
    <property type="match status" value="1"/>
</dbReference>
<dbReference type="PANTHER" id="PTHR13618:SF1">
    <property type="entry name" value="PROTEIN ROGDI HOMOLOG"/>
    <property type="match status" value="1"/>
</dbReference>
<dbReference type="Pfam" id="PF10259">
    <property type="entry name" value="Rogdi_lz"/>
    <property type="match status" value="1"/>
</dbReference>
<name>ROGDI_CAEEL</name>
<accession>O17213</accession>
<gene>
    <name type="ORF">H14A12.3</name>
</gene>
<evidence type="ECO:0000250" key="1"/>
<evidence type="ECO:0000256" key="2">
    <source>
        <dbReference type="SAM" id="MobiDB-lite"/>
    </source>
</evidence>
<evidence type="ECO:0000305" key="3"/>
<feature type="chain" id="PRO_0000315669" description="Protein rogdi homolog">
    <location>
        <begin position="1"/>
        <end position="292"/>
    </location>
</feature>
<feature type="region of interest" description="Disordered" evidence="2">
    <location>
        <begin position="1"/>
        <end position="25"/>
    </location>
</feature>
<feature type="compositionally biased region" description="Polar residues" evidence="2">
    <location>
        <begin position="1"/>
        <end position="12"/>
    </location>
</feature>
<keyword id="KW-0539">Nucleus</keyword>
<keyword id="KW-1185">Reference proteome</keyword>
<organism>
    <name type="scientific">Caenorhabditis elegans</name>
    <dbReference type="NCBI Taxonomy" id="6239"/>
    <lineage>
        <taxon>Eukaryota</taxon>
        <taxon>Metazoa</taxon>
        <taxon>Ecdysozoa</taxon>
        <taxon>Nematoda</taxon>
        <taxon>Chromadorea</taxon>
        <taxon>Rhabditida</taxon>
        <taxon>Rhabditina</taxon>
        <taxon>Rhabditomorpha</taxon>
        <taxon>Rhabditoidea</taxon>
        <taxon>Rhabditidae</taxon>
        <taxon>Peloderinae</taxon>
        <taxon>Caenorhabditis</taxon>
    </lineage>
</organism>
<comment type="subcellular location">
    <subcellularLocation>
        <location evidence="1">Nucleus envelope</location>
    </subcellularLocation>
</comment>
<comment type="similarity">
    <text evidence="3">Belongs to the rogdi family.</text>
</comment>